<proteinExistence type="evidence at protein level"/>
<feature type="transit peptide" description="Mitochondrion" evidence="3">
    <location>
        <begin position="1"/>
        <end position="33"/>
    </location>
</feature>
<feature type="chain" id="PRO_0000002691" description="ATP synthase subunit gamma, mitochondrial">
    <location>
        <begin position="34"/>
        <end position="311"/>
    </location>
</feature>
<feature type="sequence variant" description="In strain: D273-10B/A1.">
    <original>S</original>
    <variation>I</variation>
    <location>
        <position position="207"/>
    </location>
</feature>
<feature type="sequence variant" description="In allele ATP3a.">
    <original>S</original>
    <variation>F</variation>
    <location>
        <position position="308"/>
    </location>
</feature>
<feature type="mutagenesis site" description="Lower activity." evidence="3">
    <original>A</original>
    <variation>V</variation>
    <location>
        <position position="273"/>
    </location>
</feature>
<feature type="mutagenesis site" description="In ATP3-5; dominant suppressor of the slow-growth phenotype of yme1 strains lacking mitochondrial DNA." evidence="2">
    <original>T</original>
    <variation>A</variation>
    <location>
        <position position="297"/>
    </location>
</feature>
<feature type="mutagenesis site" description="In ATP3-1; dominant suppressor of the slow-growth phenotype of yme1 strains lacking mitochondrial DNA." evidence="2">
    <original>I</original>
    <variation>T</variation>
    <location>
        <position position="303"/>
    </location>
</feature>
<feature type="helix" evidence="5">
    <location>
        <begin position="36"/>
        <end position="79"/>
    </location>
</feature>
<feature type="helix" evidence="5">
    <location>
        <begin position="83"/>
        <end position="87"/>
    </location>
</feature>
<feature type="strand" evidence="5">
    <location>
        <begin position="105"/>
        <end position="110"/>
    </location>
</feature>
<feature type="helix" evidence="5">
    <location>
        <begin position="120"/>
        <end position="134"/>
    </location>
</feature>
<feature type="strand" evidence="5">
    <location>
        <begin position="139"/>
        <end position="144"/>
    </location>
</feature>
<feature type="helix" evidence="5">
    <location>
        <begin position="145"/>
        <end position="154"/>
    </location>
</feature>
<feature type="helix" evidence="5">
    <location>
        <begin position="156"/>
        <end position="158"/>
    </location>
</feature>
<feature type="strand" evidence="5">
    <location>
        <begin position="159"/>
        <end position="165"/>
    </location>
</feature>
<feature type="strand" evidence="5">
    <location>
        <begin position="167"/>
        <end position="169"/>
    </location>
</feature>
<feature type="helix" evidence="5">
    <location>
        <begin position="173"/>
        <end position="186"/>
    </location>
</feature>
<feature type="helix" evidence="5">
    <location>
        <begin position="189"/>
        <end position="191"/>
    </location>
</feature>
<feature type="strand" evidence="5">
    <location>
        <begin position="193"/>
        <end position="201"/>
    </location>
</feature>
<feature type="strand" evidence="5">
    <location>
        <begin position="203"/>
        <end position="206"/>
    </location>
</feature>
<feature type="strand" evidence="5">
    <location>
        <begin position="209"/>
        <end position="215"/>
    </location>
</feature>
<feature type="helix" evidence="5">
    <location>
        <begin position="218"/>
        <end position="222"/>
    </location>
</feature>
<feature type="helix" evidence="5">
    <location>
        <begin position="227"/>
        <end position="229"/>
    </location>
</feature>
<feature type="strand" evidence="5">
    <location>
        <begin position="234"/>
        <end position="236"/>
    </location>
</feature>
<feature type="helix" evidence="5">
    <location>
        <begin position="239"/>
        <end position="308"/>
    </location>
</feature>
<sequence>MLSRIVSNNATRSVMCHQAQVGILYKTNPVRTYATLKEVEMRLKSIKNIEKITKTMKIVASTRLSKAEKAKISAKKMDEAEQLFYKNAETKNLDVEATETGAPKELIVAITSDKGLCGSIHSQLAKAVRRHLNDQPNADIVTIGDKIKMQLLRTHPNNIKLSINGIGKDAPTFQESALIADKLLSVMKAGTYPKISIFYNDPVSSLSFEPSEKPIFNAKTIEQSPSFGKFEIDTDANVPRDLFEYTLANQMLTAMAQGYAAEISARRNAMDNASKNAGDMINRYSILYNRTRQAVITNELVDIITGASSLG</sequence>
<keyword id="KW-0002">3D-structure</keyword>
<keyword id="KW-0066">ATP synthesis</keyword>
<keyword id="KW-0139">CF(1)</keyword>
<keyword id="KW-0903">Direct protein sequencing</keyword>
<keyword id="KW-0375">Hydrogen ion transport</keyword>
<keyword id="KW-0406">Ion transport</keyword>
<keyword id="KW-0472">Membrane</keyword>
<keyword id="KW-0496">Mitochondrion</keyword>
<keyword id="KW-0999">Mitochondrion inner membrane</keyword>
<keyword id="KW-1185">Reference proteome</keyword>
<keyword id="KW-0809">Transit peptide</keyword>
<keyword id="KW-0813">Transport</keyword>
<comment type="function">
    <text>Mitochondrial membrane ATP synthase (F(1)F(0) ATP synthase or Complex V) produces ATP from ADP in the presence of a proton gradient across the membrane which is generated by electron transport complexes of the respiratory chain. F-type ATPases consist of two structural domains, F(1) - containing the extramembraneous catalytic core, and F(0) - containing the membrane proton channel, linked together by a central stalk and a peripheral stalk. During catalysis, ATP synthesis in the catalytic domain of F(1) is coupled via a rotary mechanism of the central stalk subunits to proton translocation. Part of the complex F(1) domain and the central stalk which is part of the complex rotary element. The gamma subunit protrudes into the catalytic domain formed of alpha(3)beta(3). Rotation of the central stalk against the surrounding alpha(3)beta(3) subunits leads to hydrolysis of ATP in three separate catalytic sites on the beta subunits.</text>
</comment>
<comment type="subunit">
    <text>F-type ATPases have 2 components, CF(1) - the catalytic core - and CF(0) - the membrane proton channel. CF(1) has five subunits: alpha(3), beta(3), gamma(1), delta(1), epsilon(1). CF(0) has three main subunits: a, b and c.</text>
</comment>
<comment type="subcellular location">
    <subcellularLocation>
        <location>Mitochondrion</location>
    </subcellularLocation>
    <subcellularLocation>
        <location>Mitochondrion inner membrane</location>
        <topology>Peripheral membrane protein</topology>
    </subcellularLocation>
</comment>
<comment type="miscellaneous">
    <text evidence="1">Present with 28100 molecules/cell in log phase SD medium.</text>
</comment>
<comment type="miscellaneous">
    <text>PubMed:12898710 reports two tandemly repeated copies of ATP3 (ATP3a and ATP3b) on the right arm of chromosome II in several laboratory strains, including S288c. This has not been confirmed by the yeast genome sequencing project.</text>
</comment>
<comment type="similarity">
    <text evidence="4">Belongs to the ATPase gamma chain family.</text>
</comment>
<accession>P38077</accession>
<accession>D6VQ39</accession>
<accession>Q54AF5</accession>
<accession>Q76MT6</accession>
<organism>
    <name type="scientific">Saccharomyces cerevisiae (strain ATCC 204508 / S288c)</name>
    <name type="common">Baker's yeast</name>
    <dbReference type="NCBI Taxonomy" id="559292"/>
    <lineage>
        <taxon>Eukaryota</taxon>
        <taxon>Fungi</taxon>
        <taxon>Dikarya</taxon>
        <taxon>Ascomycota</taxon>
        <taxon>Saccharomycotina</taxon>
        <taxon>Saccharomycetes</taxon>
        <taxon>Saccharomycetales</taxon>
        <taxon>Saccharomycetaceae</taxon>
        <taxon>Saccharomyces</taxon>
    </lineage>
</organism>
<reference key="1">
    <citation type="journal article" date="1994" name="J. Biol. Chem.">
        <title>Cloning of the yeast ATP3 gene coding for the gamma-subunit of F1 and characterization of atp3 mutants.</title>
        <authorList>
            <person name="Paul M.-F."/>
            <person name="Ackermann S."/>
            <person name="Yue J."/>
            <person name="Arselin G."/>
            <person name="Velours J."/>
            <person name="Tzagoloff A."/>
        </authorList>
    </citation>
    <scope>NUCLEOTIDE SEQUENCE [GENOMIC DNA]</scope>
    <scope>PROTEIN SEQUENCE OF 34-61; 77-86; 195-207; 220-240 AND 284-290</scope>
    <scope>MUTAGENESIS OF ALA-273</scope>
    <source>
        <strain>ATCC 201238 / W303-1B</strain>
        <strain>D273-10B/A1</strain>
    </source>
</reference>
<reference key="2">
    <citation type="journal article" date="1995" name="Genetics">
        <title>Mutations in the mitochondrial ATP synthase gamma subunit suppress a slow-growth phenotype of yme1 yeast lacking mitochondrial DNA.</title>
        <authorList>
            <person name="Weber E.R."/>
            <person name="Rooks R.S."/>
            <person name="Shafer K.S."/>
            <person name="Chase J.W."/>
            <person name="Thorsness P.E."/>
        </authorList>
    </citation>
    <scope>NUCLEOTIDE SEQUENCE [GENOMIC DNA]</scope>
    <scope>MUTAGENESIS OF THR-297 AND ILE-303</scope>
</reference>
<reference key="3">
    <citation type="journal article" date="2003" name="Yeast">
        <title>Studies on the ATP3 gene of Saccharomyces cerevisiae: presence of two closely linked copies, ATP3a and ATP3b, on the right arm of chromosome II.</title>
        <authorList>
            <person name="Ohnishi K."/>
            <person name="Ishibashi S."/>
            <person name="Kunihiro M."/>
            <person name="Satoh T."/>
            <person name="Matsubara K."/>
            <person name="Oku S."/>
            <person name="Ono B."/>
            <person name="Mabuchi T."/>
            <person name="Takeda M."/>
        </authorList>
    </citation>
    <scope>NUCLEOTIDE SEQUENCE [GENOMIC DNA] (ALLELES ATP3A AND ATP3B)</scope>
    <source>
        <strain>ATCC 64665 / S288c / DC5</strain>
    </source>
</reference>
<reference key="4">
    <citation type="journal article" date="1994" name="EMBO J.">
        <title>Complete DNA sequence of yeast chromosome II.</title>
        <authorList>
            <person name="Feldmann H."/>
            <person name="Aigle M."/>
            <person name="Aljinovic G."/>
            <person name="Andre B."/>
            <person name="Baclet M.C."/>
            <person name="Barthe C."/>
            <person name="Baur A."/>
            <person name="Becam A.-M."/>
            <person name="Biteau N."/>
            <person name="Boles E."/>
            <person name="Brandt T."/>
            <person name="Brendel M."/>
            <person name="Brueckner M."/>
            <person name="Bussereau F."/>
            <person name="Christiansen C."/>
            <person name="Contreras R."/>
            <person name="Crouzet M."/>
            <person name="Cziepluch C."/>
            <person name="Demolis N."/>
            <person name="Delaveau T."/>
            <person name="Doignon F."/>
            <person name="Domdey H."/>
            <person name="Duesterhus S."/>
            <person name="Dubois E."/>
            <person name="Dujon B."/>
            <person name="El Bakkoury M."/>
            <person name="Entian K.-D."/>
            <person name="Feuermann M."/>
            <person name="Fiers W."/>
            <person name="Fobo G.M."/>
            <person name="Fritz C."/>
            <person name="Gassenhuber J."/>
            <person name="Glansdorff N."/>
            <person name="Goffeau A."/>
            <person name="Grivell L.A."/>
            <person name="de Haan M."/>
            <person name="Hein C."/>
            <person name="Herbert C.J."/>
            <person name="Hollenberg C.P."/>
            <person name="Holmstroem K."/>
            <person name="Jacq C."/>
            <person name="Jacquet M."/>
            <person name="Jauniaux J.-C."/>
            <person name="Jonniaux J.-L."/>
            <person name="Kallesoee T."/>
            <person name="Kiesau P."/>
            <person name="Kirchrath L."/>
            <person name="Koetter P."/>
            <person name="Korol S."/>
            <person name="Liebl S."/>
            <person name="Logghe M."/>
            <person name="Lohan A.J.E."/>
            <person name="Louis E.J."/>
            <person name="Li Z.Y."/>
            <person name="Maat M.J."/>
            <person name="Mallet L."/>
            <person name="Mannhaupt G."/>
            <person name="Messenguy F."/>
            <person name="Miosga T."/>
            <person name="Molemans F."/>
            <person name="Mueller S."/>
            <person name="Nasr F."/>
            <person name="Obermaier B."/>
            <person name="Perea J."/>
            <person name="Pierard A."/>
            <person name="Piravandi E."/>
            <person name="Pohl F.M."/>
            <person name="Pohl T.M."/>
            <person name="Potier S."/>
            <person name="Proft M."/>
            <person name="Purnelle B."/>
            <person name="Ramezani Rad M."/>
            <person name="Rieger M."/>
            <person name="Rose M."/>
            <person name="Schaaff-Gerstenschlaeger I."/>
            <person name="Scherens B."/>
            <person name="Schwarzlose C."/>
            <person name="Skala J."/>
            <person name="Slonimski P.P."/>
            <person name="Smits P.H.M."/>
            <person name="Souciet J.-L."/>
            <person name="Steensma H.Y."/>
            <person name="Stucka R."/>
            <person name="Urrestarazu L.A."/>
            <person name="van der Aart Q.J.M."/>
            <person name="Van Dyck L."/>
            <person name="Vassarotti A."/>
            <person name="Vetter I."/>
            <person name="Vierendeels F."/>
            <person name="Vissers S."/>
            <person name="Wagner G."/>
            <person name="de Wergifosse P."/>
            <person name="Wolfe K.H."/>
            <person name="Zagulski M."/>
            <person name="Zimmermann F.K."/>
            <person name="Mewes H.-W."/>
            <person name="Kleine K."/>
        </authorList>
    </citation>
    <scope>NUCLEOTIDE SEQUENCE [LARGE SCALE GENOMIC DNA]</scope>
    <source>
        <strain>ATCC 204508 / S288c</strain>
    </source>
</reference>
<reference key="5">
    <citation type="journal article" date="2014" name="G3 (Bethesda)">
        <title>The reference genome sequence of Saccharomyces cerevisiae: Then and now.</title>
        <authorList>
            <person name="Engel S.R."/>
            <person name="Dietrich F.S."/>
            <person name="Fisk D.G."/>
            <person name="Binkley G."/>
            <person name="Balakrishnan R."/>
            <person name="Costanzo M.C."/>
            <person name="Dwight S.S."/>
            <person name="Hitz B.C."/>
            <person name="Karra K."/>
            <person name="Nash R.S."/>
            <person name="Weng S."/>
            <person name="Wong E.D."/>
            <person name="Lloyd P."/>
            <person name="Skrzypek M.S."/>
            <person name="Miyasato S.R."/>
            <person name="Simison M."/>
            <person name="Cherry J.M."/>
        </authorList>
    </citation>
    <scope>GENOME REANNOTATION</scope>
    <source>
        <strain>ATCC 204508 / S288c</strain>
    </source>
</reference>
<reference key="6">
    <citation type="journal article" date="2007" name="Genome Res.">
        <title>Approaching a complete repository of sequence-verified protein-encoding clones for Saccharomyces cerevisiae.</title>
        <authorList>
            <person name="Hu Y."/>
            <person name="Rolfs A."/>
            <person name="Bhullar B."/>
            <person name="Murthy T.V.S."/>
            <person name="Zhu C."/>
            <person name="Berger M.F."/>
            <person name="Camargo A.A."/>
            <person name="Kelley F."/>
            <person name="McCarron S."/>
            <person name="Jepson D."/>
            <person name="Richardson A."/>
            <person name="Raphael J."/>
            <person name="Moreira D."/>
            <person name="Taycher E."/>
            <person name="Zuo D."/>
            <person name="Mohr S."/>
            <person name="Kane M.F."/>
            <person name="Williamson J."/>
            <person name="Simpson A.J.G."/>
            <person name="Bulyk M.L."/>
            <person name="Harlow E."/>
            <person name="Marsischky G."/>
            <person name="Kolodner R.D."/>
            <person name="LaBaer J."/>
        </authorList>
    </citation>
    <scope>NUCLEOTIDE SEQUENCE [GENOMIC DNA]</scope>
    <source>
        <strain>ATCC 204508 / S288c</strain>
    </source>
</reference>
<reference key="7">
    <citation type="journal article" date="2003" name="Nature">
        <title>Global analysis of protein expression in yeast.</title>
        <authorList>
            <person name="Ghaemmaghami S."/>
            <person name="Huh W.-K."/>
            <person name="Bower K."/>
            <person name="Howson R.W."/>
            <person name="Belle A."/>
            <person name="Dephoure N."/>
            <person name="O'Shea E.K."/>
            <person name="Weissman J.S."/>
        </authorList>
    </citation>
    <scope>LEVEL OF PROTEIN EXPRESSION [LARGE SCALE ANALYSIS]</scope>
</reference>
<reference key="8">
    <citation type="journal article" date="1999" name="Science">
        <title>Molecular architecture of the rotary motor in ATP synthase.</title>
        <authorList>
            <person name="Stock D."/>
            <person name="Leslie A.G."/>
            <person name="Walker J.E."/>
        </authorList>
    </citation>
    <scope>3D-STRUCTURE MODELING</scope>
</reference>
<reference key="9">
    <citation type="journal article" date="2006" name="EMBO J.">
        <title>Novel features of the rotary catalytic mechanism revealed in the structure of yeast F1 ATPase.</title>
        <authorList>
            <person name="Kabaleeswaran V."/>
            <person name="Puri N."/>
            <person name="Walker J.E."/>
            <person name="Leslie A.G.W."/>
            <person name="Mueller D.M."/>
        </authorList>
    </citation>
    <scope>X-RAY CRYSTALLOGRAPHY (2.8 ANGSTROMS) OF 34-311</scope>
</reference>
<reference key="10">
    <citation type="journal article" date="2009" name="J. Biol. Chem.">
        <title>Asymmetric structure of the yeast F1 ATPase in the absence of bound nucleotides.</title>
        <authorList>
            <person name="Kabaleeswaran V."/>
            <person name="Shen H."/>
            <person name="Symersky J."/>
            <person name="Walker J.E."/>
            <person name="Leslie A.G.W."/>
            <person name="Mueller D.M."/>
        </authorList>
    </citation>
    <scope>X-RAY CRYSTALLOGRAPHY (3.59 ANGSTROMS) OF 34-311</scope>
</reference>
<protein>
    <recommendedName>
        <fullName>ATP synthase subunit gamma, mitochondrial</fullName>
    </recommendedName>
    <alternativeName>
        <fullName>F-ATPase gamma subunit</fullName>
    </alternativeName>
</protein>
<gene>
    <name type="primary">ATP3</name>
    <name type="synonym">ATP3a</name>
    <name type="synonym">ATP3b</name>
    <name type="ordered locus">YBR039W</name>
    <name type="ORF">YBR0408</name>
</gene>
<name>ATPG_YEAST</name>
<dbReference type="EMBL" id="U09305">
    <property type="protein sequence ID" value="AAA62605.1"/>
    <property type="molecule type" value="Genomic_DNA"/>
</dbReference>
<dbReference type="EMBL" id="U08318">
    <property type="protein sequence ID" value="AAA88816.1"/>
    <property type="molecule type" value="Unassigned_DNA"/>
</dbReference>
<dbReference type="EMBL" id="AB036928">
    <property type="protein sequence ID" value="BAC97839.1"/>
    <property type="molecule type" value="Genomic_DNA"/>
</dbReference>
<dbReference type="EMBL" id="AB036929">
    <property type="protein sequence ID" value="BAC97840.1"/>
    <property type="molecule type" value="Genomic_DNA"/>
</dbReference>
<dbReference type="EMBL" id="Z35908">
    <property type="protein sequence ID" value="CAA84981.1"/>
    <property type="molecule type" value="Genomic_DNA"/>
</dbReference>
<dbReference type="EMBL" id="AY557865">
    <property type="protein sequence ID" value="AAS56191.1"/>
    <property type="molecule type" value="Genomic_DNA"/>
</dbReference>
<dbReference type="EMBL" id="BK006936">
    <property type="protein sequence ID" value="DAA07159.1"/>
    <property type="molecule type" value="Genomic_DNA"/>
</dbReference>
<dbReference type="PIR" id="S55891">
    <property type="entry name" value="S55891"/>
</dbReference>
<dbReference type="RefSeq" id="NP_009595.1">
    <property type="nucleotide sequence ID" value="NM_001178387.1"/>
</dbReference>
<dbReference type="PDB" id="2HLD">
    <property type="method" value="X-ray"/>
    <property type="resolution" value="2.80 A"/>
    <property type="chains" value="G/P/Y=34-311"/>
</dbReference>
<dbReference type="PDB" id="2WPD">
    <property type="method" value="X-ray"/>
    <property type="resolution" value="3.43 A"/>
    <property type="chains" value="G=34-311"/>
</dbReference>
<dbReference type="PDB" id="2XOK">
    <property type="method" value="X-ray"/>
    <property type="resolution" value="3.01 A"/>
    <property type="chains" value="G=1-311"/>
</dbReference>
<dbReference type="PDB" id="3FKS">
    <property type="method" value="X-ray"/>
    <property type="resolution" value="3.59 A"/>
    <property type="chains" value="G/P/Y=34-311"/>
</dbReference>
<dbReference type="PDB" id="3OE7">
    <property type="method" value="X-ray"/>
    <property type="resolution" value="3.19 A"/>
    <property type="chains" value="G/P/Y=34-311"/>
</dbReference>
<dbReference type="PDB" id="3OEE">
    <property type="method" value="X-ray"/>
    <property type="resolution" value="2.74 A"/>
    <property type="chains" value="G/P/Y=34-311"/>
</dbReference>
<dbReference type="PDB" id="3OEH">
    <property type="method" value="X-ray"/>
    <property type="resolution" value="3.00 A"/>
    <property type="chains" value="G/P/Y=34-311"/>
</dbReference>
<dbReference type="PDB" id="3OFN">
    <property type="method" value="X-ray"/>
    <property type="resolution" value="3.20 A"/>
    <property type="chains" value="G/P/Y=34-311"/>
</dbReference>
<dbReference type="PDB" id="3ZIA">
    <property type="method" value="X-ray"/>
    <property type="resolution" value="2.50 A"/>
    <property type="chains" value="G/Q=34-311"/>
</dbReference>
<dbReference type="PDB" id="3ZRY">
    <property type="method" value="X-ray"/>
    <property type="resolution" value="6.50 A"/>
    <property type="chains" value="G=34-311"/>
</dbReference>
<dbReference type="PDB" id="4B2Q">
    <property type="method" value="EM"/>
    <property type="resolution" value="37.00 A"/>
    <property type="chains" value="G/g=34-311"/>
</dbReference>
<dbReference type="PDB" id="6B8H">
    <property type="method" value="EM"/>
    <property type="resolution" value="3.60 A"/>
    <property type="chains" value="G/j=34-311"/>
</dbReference>
<dbReference type="PDB" id="6CP3">
    <property type="method" value="EM"/>
    <property type="resolution" value="3.80 A"/>
    <property type="chains" value="G=34-311"/>
</dbReference>
<dbReference type="PDB" id="6CP6">
    <property type="method" value="EM"/>
    <property type="resolution" value="3.60 A"/>
    <property type="chains" value="G=34-311"/>
</dbReference>
<dbReference type="PDB" id="7TJT">
    <property type="method" value="EM"/>
    <property type="resolution" value="3.20 A"/>
    <property type="chains" value="G=34-311"/>
</dbReference>
<dbReference type="PDB" id="7TJU">
    <property type="method" value="EM"/>
    <property type="resolution" value="3.30 A"/>
    <property type="chains" value="G=34-311"/>
</dbReference>
<dbReference type="PDB" id="7TJV">
    <property type="method" value="EM"/>
    <property type="resolution" value="3.60 A"/>
    <property type="chains" value="G=34-311"/>
</dbReference>
<dbReference type="PDB" id="7TJW">
    <property type="method" value="EM"/>
    <property type="resolution" value="4.00 A"/>
    <property type="chains" value="G=34-311"/>
</dbReference>
<dbReference type="PDB" id="7TJX">
    <property type="method" value="EM"/>
    <property type="resolution" value="4.00 A"/>
    <property type="chains" value="G=34-311"/>
</dbReference>
<dbReference type="PDB" id="7TJY">
    <property type="method" value="EM"/>
    <property type="resolution" value="3.80 A"/>
    <property type="chains" value="G=34-311"/>
</dbReference>
<dbReference type="PDB" id="7TJZ">
    <property type="method" value="EM"/>
    <property type="resolution" value="4.40 A"/>
    <property type="chains" value="G=34-311"/>
</dbReference>
<dbReference type="PDB" id="7TK0">
    <property type="method" value="EM"/>
    <property type="resolution" value="4.40 A"/>
    <property type="chains" value="G=34-311"/>
</dbReference>
<dbReference type="PDB" id="7TK1">
    <property type="method" value="EM"/>
    <property type="resolution" value="7.10 A"/>
    <property type="chains" value="G=34-311"/>
</dbReference>
<dbReference type="PDB" id="7TK2">
    <property type="method" value="EM"/>
    <property type="resolution" value="6.50 A"/>
    <property type="chains" value="G=34-311"/>
</dbReference>
<dbReference type="PDB" id="7TK3">
    <property type="method" value="EM"/>
    <property type="resolution" value="6.30 A"/>
    <property type="chains" value="G=34-311"/>
</dbReference>
<dbReference type="PDB" id="7TK4">
    <property type="method" value="EM"/>
    <property type="resolution" value="7.00 A"/>
    <property type="chains" value="G=34-311"/>
</dbReference>
<dbReference type="PDB" id="7TK5">
    <property type="method" value="EM"/>
    <property type="resolution" value="7.80 A"/>
    <property type="chains" value="G=34-311"/>
</dbReference>
<dbReference type="PDB" id="7TK6">
    <property type="method" value="EM"/>
    <property type="resolution" value="6.50 A"/>
    <property type="chains" value="G=34-311"/>
</dbReference>
<dbReference type="PDB" id="7TK7">
    <property type="method" value="EM"/>
    <property type="resolution" value="6.70 A"/>
    <property type="chains" value="G=34-311"/>
</dbReference>
<dbReference type="PDB" id="7TK8">
    <property type="method" value="EM"/>
    <property type="resolution" value="4.70 A"/>
    <property type="chains" value="G=34-311"/>
</dbReference>
<dbReference type="PDB" id="7TK9">
    <property type="method" value="EM"/>
    <property type="resolution" value="6.00 A"/>
    <property type="chains" value="G=34-311"/>
</dbReference>
<dbReference type="PDB" id="7TKA">
    <property type="method" value="EM"/>
    <property type="resolution" value="7.10 A"/>
    <property type="chains" value="G=34-311"/>
</dbReference>
<dbReference type="PDB" id="7TKB">
    <property type="method" value="EM"/>
    <property type="resolution" value="6.30 A"/>
    <property type="chains" value="G=34-311"/>
</dbReference>
<dbReference type="PDB" id="7TKC">
    <property type="method" value="EM"/>
    <property type="resolution" value="5.80 A"/>
    <property type="chains" value="G=34-311"/>
</dbReference>
<dbReference type="PDB" id="7TKD">
    <property type="method" value="EM"/>
    <property type="resolution" value="7.70 A"/>
    <property type="chains" value="G=34-311"/>
</dbReference>
<dbReference type="PDB" id="7TKE">
    <property type="method" value="EM"/>
    <property type="resolution" value="7.10 A"/>
    <property type="chains" value="G=34-311"/>
</dbReference>
<dbReference type="PDB" id="7TKF">
    <property type="method" value="EM"/>
    <property type="resolution" value="7.10 A"/>
    <property type="chains" value="G=34-311"/>
</dbReference>
<dbReference type="PDB" id="7TKG">
    <property type="method" value="EM"/>
    <property type="resolution" value="4.50 A"/>
    <property type="chains" value="G=34-311"/>
</dbReference>
<dbReference type="PDB" id="7TKH">
    <property type="method" value="EM"/>
    <property type="resolution" value="4.40 A"/>
    <property type="chains" value="G=34-311"/>
</dbReference>
<dbReference type="PDB" id="7TKI">
    <property type="method" value="EM"/>
    <property type="resolution" value="7.10 A"/>
    <property type="chains" value="G=34-311"/>
</dbReference>
<dbReference type="PDB" id="7TKJ">
    <property type="method" value="EM"/>
    <property type="resolution" value="7.50 A"/>
    <property type="chains" value="G=34-311"/>
</dbReference>
<dbReference type="PDB" id="7TKK">
    <property type="method" value="EM"/>
    <property type="resolution" value="7.30 A"/>
    <property type="chains" value="G=34-311"/>
</dbReference>
<dbReference type="PDB" id="7TKL">
    <property type="method" value="EM"/>
    <property type="resolution" value="6.40 A"/>
    <property type="chains" value="G=34-311"/>
</dbReference>
<dbReference type="PDB" id="7TKM">
    <property type="method" value="EM"/>
    <property type="resolution" value="4.50 A"/>
    <property type="chains" value="G=34-311"/>
</dbReference>
<dbReference type="PDB" id="7TKN">
    <property type="method" value="EM"/>
    <property type="resolution" value="7.10 A"/>
    <property type="chains" value="G=34-311"/>
</dbReference>
<dbReference type="PDB" id="7TKO">
    <property type="method" value="EM"/>
    <property type="resolution" value="4.80 A"/>
    <property type="chains" value="G=34-311"/>
</dbReference>
<dbReference type="PDB" id="7TKP">
    <property type="method" value="EM"/>
    <property type="resolution" value="4.60 A"/>
    <property type="chains" value="G=34-311"/>
</dbReference>
<dbReference type="PDB" id="7TKQ">
    <property type="method" value="EM"/>
    <property type="resolution" value="4.50 A"/>
    <property type="chains" value="G=34-311"/>
</dbReference>
<dbReference type="PDB" id="7TKR">
    <property type="method" value="EM"/>
    <property type="resolution" value="6.50 A"/>
    <property type="chains" value="G=34-311"/>
</dbReference>
<dbReference type="PDB" id="7TKS">
    <property type="method" value="EM"/>
    <property type="resolution" value="7.50 A"/>
    <property type="chains" value="G=34-311"/>
</dbReference>
<dbReference type="PDB" id="8F29">
    <property type="method" value="EM"/>
    <property type="resolution" value="4.00 A"/>
    <property type="chains" value="G=38-307"/>
</dbReference>
<dbReference type="PDB" id="8F2K">
    <property type="method" value="EM"/>
    <property type="resolution" value="2.90 A"/>
    <property type="chains" value="G=34-308"/>
</dbReference>
<dbReference type="PDB" id="8F39">
    <property type="method" value="EM"/>
    <property type="resolution" value="3.50 A"/>
    <property type="chains" value="G=38-307"/>
</dbReference>
<dbReference type="PDB" id="8FKJ">
    <property type="method" value="EM"/>
    <property type="resolution" value="4.20 A"/>
    <property type="chains" value="G=38-307"/>
</dbReference>
<dbReference type="PDB" id="8FL8">
    <property type="method" value="EM"/>
    <property type="resolution" value="4.20 A"/>
    <property type="chains" value="G=38-307"/>
</dbReference>
<dbReference type="PDBsum" id="2HLD"/>
<dbReference type="PDBsum" id="2WPD"/>
<dbReference type="PDBsum" id="2XOK"/>
<dbReference type="PDBsum" id="3FKS"/>
<dbReference type="PDBsum" id="3OE7"/>
<dbReference type="PDBsum" id="3OEE"/>
<dbReference type="PDBsum" id="3OEH"/>
<dbReference type="PDBsum" id="3OFN"/>
<dbReference type="PDBsum" id="3ZIA"/>
<dbReference type="PDBsum" id="3ZRY"/>
<dbReference type="PDBsum" id="4B2Q"/>
<dbReference type="PDBsum" id="6B8H"/>
<dbReference type="PDBsum" id="6CP3"/>
<dbReference type="PDBsum" id="6CP6"/>
<dbReference type="PDBsum" id="7TJT"/>
<dbReference type="PDBsum" id="7TJU"/>
<dbReference type="PDBsum" id="7TJV"/>
<dbReference type="PDBsum" id="7TJW"/>
<dbReference type="PDBsum" id="7TJX"/>
<dbReference type="PDBsum" id="7TJY"/>
<dbReference type="PDBsum" id="7TJZ"/>
<dbReference type="PDBsum" id="7TK0"/>
<dbReference type="PDBsum" id="7TK1"/>
<dbReference type="PDBsum" id="7TK2"/>
<dbReference type="PDBsum" id="7TK3"/>
<dbReference type="PDBsum" id="7TK4"/>
<dbReference type="PDBsum" id="7TK5"/>
<dbReference type="PDBsum" id="7TK6"/>
<dbReference type="PDBsum" id="7TK7"/>
<dbReference type="PDBsum" id="7TK8"/>
<dbReference type="PDBsum" id="7TK9"/>
<dbReference type="PDBsum" id="7TKA"/>
<dbReference type="PDBsum" id="7TKB"/>
<dbReference type="PDBsum" id="7TKC"/>
<dbReference type="PDBsum" id="7TKD"/>
<dbReference type="PDBsum" id="7TKE"/>
<dbReference type="PDBsum" id="7TKF"/>
<dbReference type="PDBsum" id="7TKG"/>
<dbReference type="PDBsum" id="7TKH"/>
<dbReference type="PDBsum" id="7TKI"/>
<dbReference type="PDBsum" id="7TKJ"/>
<dbReference type="PDBsum" id="7TKK"/>
<dbReference type="PDBsum" id="7TKL"/>
<dbReference type="PDBsum" id="7TKM"/>
<dbReference type="PDBsum" id="7TKN"/>
<dbReference type="PDBsum" id="7TKO"/>
<dbReference type="PDBsum" id="7TKP"/>
<dbReference type="PDBsum" id="7TKQ"/>
<dbReference type="PDBsum" id="7TKR"/>
<dbReference type="PDBsum" id="7TKS"/>
<dbReference type="PDBsum" id="8F29"/>
<dbReference type="PDBsum" id="8F2K"/>
<dbReference type="PDBsum" id="8F39"/>
<dbReference type="PDBsum" id="8FKJ"/>
<dbReference type="PDBsum" id="8FL8"/>
<dbReference type="EMDB" id="EMD-25931"/>
<dbReference type="EMDB" id="EMD-25932"/>
<dbReference type="EMDB" id="EMD-25933"/>
<dbReference type="EMDB" id="EMD-25934"/>
<dbReference type="EMDB" id="EMD-25939"/>
<dbReference type="EMDB" id="EMD-25946"/>
<dbReference type="EMDB" id="EMD-25947"/>
<dbReference type="EMDB" id="EMD-25948"/>
<dbReference type="EMDB" id="EMD-25949"/>
<dbReference type="EMDB" id="EMD-25954"/>
<dbReference type="EMDB" id="EMD-25955"/>
<dbReference type="EMDB" id="EMD-25956"/>
<dbReference type="EMDB" id="EMD-25957"/>
<dbReference type="EMDB" id="EMD-25958"/>
<dbReference type="EMDB" id="EMD-25959"/>
<dbReference type="EMDB" id="EMD-25960"/>
<dbReference type="EMDB" id="EMD-25961"/>
<dbReference type="EMDB" id="EMD-25962"/>
<dbReference type="EMDB" id="EMD-25963"/>
<dbReference type="EMDB" id="EMD-25964"/>
<dbReference type="EMDB" id="EMD-25965"/>
<dbReference type="EMDB" id="EMD-25966"/>
<dbReference type="EMDB" id="EMD-25967"/>
<dbReference type="EMDB" id="EMD-25968"/>
<dbReference type="EMDB" id="EMD-25969"/>
<dbReference type="EMDB" id="EMD-25970"/>
<dbReference type="EMDB" id="EMD-25971"/>
<dbReference type="EMDB" id="EMD-25972"/>
<dbReference type="EMDB" id="EMD-25973"/>
<dbReference type="EMDB" id="EMD-25974"/>
<dbReference type="EMDB" id="EMD-25975"/>
<dbReference type="EMDB" id="EMD-25976"/>
<dbReference type="EMDB" id="EMD-25977"/>
<dbReference type="EMDB" id="EMD-25978"/>
<dbReference type="EMDB" id="EMD-25979"/>
<dbReference type="EMDB" id="EMD-25980"/>
<dbReference type="EMDB" id="EMD-28809"/>
<dbReference type="EMDB" id="EMD-28835"/>
<dbReference type="EMDB" id="EMD-29270"/>
<dbReference type="EMDB" id="EMD-7546"/>
<dbReference type="EMDB" id="EMD-7548"/>
<dbReference type="SMR" id="P38077"/>
<dbReference type="BioGRID" id="32740">
    <property type="interactions" value="171"/>
</dbReference>
<dbReference type="ComplexPortal" id="CPX-3281">
    <property type="entry name" value="Mitochondrial proton-transporting ATP synthase complex"/>
</dbReference>
<dbReference type="DIP" id="DIP-3035N"/>
<dbReference type="FunCoup" id="P38077">
    <property type="interactions" value="1220"/>
</dbReference>
<dbReference type="IntAct" id="P38077">
    <property type="interactions" value="75"/>
</dbReference>
<dbReference type="MINT" id="P38077"/>
<dbReference type="STRING" id="4932.YBR039W"/>
<dbReference type="TCDB" id="3.A.2.1.3">
    <property type="family name" value="the h+- or na+-translocating f-type, v-type and a-type atpase (f-atpase) superfamily"/>
</dbReference>
<dbReference type="iPTMnet" id="P38077"/>
<dbReference type="PaxDb" id="4932-YBR039W"/>
<dbReference type="PeptideAtlas" id="P38077"/>
<dbReference type="EnsemblFungi" id="YBR039W_mRNA">
    <property type="protein sequence ID" value="YBR039W"/>
    <property type="gene ID" value="YBR039W"/>
</dbReference>
<dbReference type="GeneID" id="852327"/>
<dbReference type="KEGG" id="sce:YBR039W"/>
<dbReference type="AGR" id="SGD:S000000243"/>
<dbReference type="SGD" id="S000000243">
    <property type="gene designation" value="ATP3"/>
</dbReference>
<dbReference type="VEuPathDB" id="FungiDB:YBR039W"/>
<dbReference type="eggNOG" id="KOG1531">
    <property type="taxonomic scope" value="Eukaryota"/>
</dbReference>
<dbReference type="GeneTree" id="ENSGT00390000006837"/>
<dbReference type="HOGENOM" id="CLU_050669_4_1_1"/>
<dbReference type="InParanoid" id="P38077"/>
<dbReference type="OMA" id="MQITSAM"/>
<dbReference type="OrthoDB" id="239812at2759"/>
<dbReference type="BioCyc" id="YEAST:G3O-29013-MONOMER"/>
<dbReference type="Reactome" id="R-SCE-9837999">
    <property type="pathway name" value="Mitochondrial protein degradation"/>
</dbReference>
<dbReference type="BioGRID-ORCS" id="852327">
    <property type="hits" value="5 hits in 10 CRISPR screens"/>
</dbReference>
<dbReference type="EvolutionaryTrace" id="P38077"/>
<dbReference type="PRO" id="PR:P38077"/>
<dbReference type="Proteomes" id="UP000002311">
    <property type="component" value="Chromosome II"/>
</dbReference>
<dbReference type="RNAct" id="P38077">
    <property type="molecule type" value="protein"/>
</dbReference>
<dbReference type="GO" id="GO:0005743">
    <property type="term" value="C:mitochondrial inner membrane"/>
    <property type="evidence" value="ECO:0000314"/>
    <property type="project" value="ComplexPortal"/>
</dbReference>
<dbReference type="GO" id="GO:0005739">
    <property type="term" value="C:mitochondrion"/>
    <property type="evidence" value="ECO:0007005"/>
    <property type="project" value="SGD"/>
</dbReference>
<dbReference type="GO" id="GO:0045259">
    <property type="term" value="C:proton-transporting ATP synthase complex"/>
    <property type="evidence" value="ECO:0000314"/>
    <property type="project" value="SGD"/>
</dbReference>
<dbReference type="GO" id="GO:0046933">
    <property type="term" value="F:proton-transporting ATP synthase activity, rotational mechanism"/>
    <property type="evidence" value="ECO:0007669"/>
    <property type="project" value="InterPro"/>
</dbReference>
<dbReference type="GO" id="GO:0015986">
    <property type="term" value="P:proton motive force-driven ATP synthesis"/>
    <property type="evidence" value="ECO:0000314"/>
    <property type="project" value="ComplexPortal"/>
</dbReference>
<dbReference type="CDD" id="cd12151">
    <property type="entry name" value="F1-ATPase_gamma"/>
    <property type="match status" value="1"/>
</dbReference>
<dbReference type="FunFam" id="1.10.287.80:FF:000001">
    <property type="entry name" value="ATP synthase gamma chain"/>
    <property type="match status" value="1"/>
</dbReference>
<dbReference type="FunFam" id="3.40.1380.10:FF:000003">
    <property type="entry name" value="ATP synthase subunit gamma"/>
    <property type="match status" value="1"/>
</dbReference>
<dbReference type="Gene3D" id="3.40.1380.10">
    <property type="match status" value="1"/>
</dbReference>
<dbReference type="InterPro" id="IPR035968">
    <property type="entry name" value="ATP_synth_F1_ATPase_gsu"/>
</dbReference>
<dbReference type="InterPro" id="IPR000131">
    <property type="entry name" value="ATP_synth_F1_gsu"/>
</dbReference>
<dbReference type="InterPro" id="IPR023632">
    <property type="entry name" value="ATP_synth_F1_gsu_CS"/>
</dbReference>
<dbReference type="NCBIfam" id="TIGR01146">
    <property type="entry name" value="ATPsyn_F1gamma"/>
    <property type="match status" value="1"/>
</dbReference>
<dbReference type="PANTHER" id="PTHR11693">
    <property type="entry name" value="ATP SYNTHASE GAMMA CHAIN"/>
    <property type="match status" value="1"/>
</dbReference>
<dbReference type="PANTHER" id="PTHR11693:SF22">
    <property type="entry name" value="ATP SYNTHASE SUBUNIT GAMMA, MITOCHONDRIAL"/>
    <property type="match status" value="1"/>
</dbReference>
<dbReference type="Pfam" id="PF00231">
    <property type="entry name" value="ATP-synt"/>
    <property type="match status" value="1"/>
</dbReference>
<dbReference type="PIRSF" id="PIRSF039089">
    <property type="entry name" value="ATP_synthase_gamma"/>
    <property type="match status" value="1"/>
</dbReference>
<dbReference type="PRINTS" id="PR00126">
    <property type="entry name" value="ATPASEGAMMA"/>
</dbReference>
<dbReference type="SUPFAM" id="SSF52943">
    <property type="entry name" value="ATP synthase (F1-ATPase), gamma subunit"/>
    <property type="match status" value="1"/>
</dbReference>
<dbReference type="PROSITE" id="PS00153">
    <property type="entry name" value="ATPASE_GAMMA"/>
    <property type="match status" value="1"/>
</dbReference>
<evidence type="ECO:0000269" key="1">
    <source>
    </source>
</evidence>
<evidence type="ECO:0000269" key="2">
    <source>
    </source>
</evidence>
<evidence type="ECO:0000269" key="3">
    <source>
    </source>
</evidence>
<evidence type="ECO:0000305" key="4"/>
<evidence type="ECO:0007829" key="5">
    <source>
        <dbReference type="PDB" id="3ZIA"/>
    </source>
</evidence>